<protein>
    <recommendedName>
        <fullName>Protein AAR2 homolog</fullName>
    </recommendedName>
    <alternativeName>
        <fullName>AAR2 splicing factor homolog</fullName>
    </alternativeName>
</protein>
<keyword id="KW-0007">Acetylation</keyword>
<keyword id="KW-0507">mRNA processing</keyword>
<keyword id="KW-0508">mRNA splicing</keyword>
<keyword id="KW-1185">Reference proteome</keyword>
<keyword id="KW-0747">Spliceosome</keyword>
<accession>Q5R5N9</accession>
<feature type="initiator methionine" description="Removed" evidence="2">
    <location>
        <position position="1"/>
    </location>
</feature>
<feature type="chain" id="PRO_0000265092" description="Protein AAR2 homolog">
    <location>
        <begin position="2"/>
        <end position="384"/>
    </location>
</feature>
<feature type="modified residue" description="N-acetylalanine" evidence="2">
    <location>
        <position position="2"/>
    </location>
</feature>
<proteinExistence type="evidence at transcript level"/>
<dbReference type="EMBL" id="CR860818">
    <property type="protein sequence ID" value="CAH92927.1"/>
    <property type="molecule type" value="mRNA"/>
</dbReference>
<dbReference type="RefSeq" id="NP_001127605.1">
    <property type="nucleotide sequence ID" value="NM_001134133.1"/>
</dbReference>
<dbReference type="SMR" id="Q5R5N9"/>
<dbReference type="FunCoup" id="Q5R5N9">
    <property type="interactions" value="1767"/>
</dbReference>
<dbReference type="STRING" id="9601.ENSPPYP00000012249"/>
<dbReference type="GeneID" id="100174684"/>
<dbReference type="KEGG" id="pon:100174684"/>
<dbReference type="CTD" id="25980"/>
<dbReference type="eggNOG" id="KOG3937">
    <property type="taxonomic scope" value="Eukaryota"/>
</dbReference>
<dbReference type="InParanoid" id="Q5R5N9"/>
<dbReference type="OrthoDB" id="201752at2759"/>
<dbReference type="Proteomes" id="UP000001595">
    <property type="component" value="Unplaced"/>
</dbReference>
<dbReference type="GO" id="GO:0005681">
    <property type="term" value="C:spliceosomal complex"/>
    <property type="evidence" value="ECO:0007669"/>
    <property type="project" value="UniProtKB-KW"/>
</dbReference>
<dbReference type="GO" id="GO:0000244">
    <property type="term" value="P:spliceosomal tri-snRNP complex assembly"/>
    <property type="evidence" value="ECO:0007669"/>
    <property type="project" value="TreeGrafter"/>
</dbReference>
<dbReference type="CDD" id="cd13778">
    <property type="entry name" value="Aar2_C"/>
    <property type="match status" value="1"/>
</dbReference>
<dbReference type="CDD" id="cd13777">
    <property type="entry name" value="Aar2_N"/>
    <property type="match status" value="1"/>
</dbReference>
<dbReference type="FunFam" id="1.25.40.550:FF:000001">
    <property type="entry name" value="AAR2 splicing factor homolog"/>
    <property type="match status" value="1"/>
</dbReference>
<dbReference type="FunFam" id="2.60.34.20:FF:000001">
    <property type="entry name" value="protein AAR2 homolog"/>
    <property type="match status" value="1"/>
</dbReference>
<dbReference type="Gene3D" id="2.60.34.20">
    <property type="match status" value="1"/>
</dbReference>
<dbReference type="Gene3D" id="1.25.40.550">
    <property type="entry name" value="Aar2, C-terminal domain-like"/>
    <property type="match status" value="1"/>
</dbReference>
<dbReference type="InterPro" id="IPR007946">
    <property type="entry name" value="AAR2"/>
</dbReference>
<dbReference type="InterPro" id="IPR033648">
    <property type="entry name" value="AAR2_C"/>
</dbReference>
<dbReference type="InterPro" id="IPR038514">
    <property type="entry name" value="AAR2_C_sf"/>
</dbReference>
<dbReference type="InterPro" id="IPR033647">
    <property type="entry name" value="Aar2_N"/>
</dbReference>
<dbReference type="InterPro" id="IPR038516">
    <property type="entry name" value="AAR2_N_sf"/>
</dbReference>
<dbReference type="PANTHER" id="PTHR12689">
    <property type="entry name" value="A1 CISTRON SPLICING FACTOR AAR2-RELATED"/>
    <property type="match status" value="1"/>
</dbReference>
<dbReference type="PANTHER" id="PTHR12689:SF4">
    <property type="entry name" value="PROTEIN AAR2 HOMOLOG"/>
    <property type="match status" value="1"/>
</dbReference>
<dbReference type="Pfam" id="PF05282">
    <property type="entry name" value="AAR2"/>
    <property type="match status" value="1"/>
</dbReference>
<dbReference type="Pfam" id="PF20981">
    <property type="entry name" value="AAR2_1st"/>
    <property type="match status" value="1"/>
</dbReference>
<evidence type="ECO:0000250" key="1">
    <source>
        <dbReference type="UniProtKB" id="P32357"/>
    </source>
</evidence>
<evidence type="ECO:0000250" key="2">
    <source>
        <dbReference type="UniProtKB" id="Q9Y312"/>
    </source>
</evidence>
<evidence type="ECO:0000305" key="3"/>
<organism>
    <name type="scientific">Pongo abelii</name>
    <name type="common">Sumatran orangutan</name>
    <name type="synonym">Pongo pygmaeus abelii</name>
    <dbReference type="NCBI Taxonomy" id="9601"/>
    <lineage>
        <taxon>Eukaryota</taxon>
        <taxon>Metazoa</taxon>
        <taxon>Chordata</taxon>
        <taxon>Craniata</taxon>
        <taxon>Vertebrata</taxon>
        <taxon>Euteleostomi</taxon>
        <taxon>Mammalia</taxon>
        <taxon>Eutheria</taxon>
        <taxon>Euarchontoglires</taxon>
        <taxon>Primates</taxon>
        <taxon>Haplorrhini</taxon>
        <taxon>Catarrhini</taxon>
        <taxon>Hominidae</taxon>
        <taxon>Pongo</taxon>
    </lineage>
</organism>
<reference key="1">
    <citation type="submission" date="2004-11" db="EMBL/GenBank/DDBJ databases">
        <authorList>
            <consortium name="The German cDNA consortium"/>
        </authorList>
    </citation>
    <scope>NUCLEOTIDE SEQUENCE [LARGE SCALE MRNA]</scope>
    <source>
        <tissue>Kidney</tissue>
    </source>
</reference>
<name>AAR2_PONAB</name>
<sequence>MAAMQMDPELAKRLFFEGATVVILNMPRGTEFGIDYNSWEVGPKFRGVKTIPPGIHFLHYSSVDKANPKEVGPRMGFFLSLHQRGLTVLRWSTLREEVDLSPAPESEVEAMRANLQELDQFLGPYPYATLKKWISLTNFISEATVEKLQPENRQICAFSDVLPVLSMKHTKDRMGQNLPRCGTECKSYQEGLARLPEMKPRAGTEIRFSELPTQMFPEGATPAEITKHSMDLSYALETVLNKQFPSSPQDVLGELQFAFVCFLLGNVYEAFEHWKRLLNLLCRSEAAMMKHHTLYINLISILYHQLGEIPADFFVDIVSQDNFLTSTLQVFFSSACSIAVDATLRKKAEKFQAHLTKKFRWDFAAEPEDCAPVVVELPEGIEMG</sequence>
<comment type="function">
    <text evidence="1">Component of the U5 snRNP complex that is required for spliceosome assembly and for pre-mRNA splicing.</text>
</comment>
<comment type="subunit">
    <text evidence="1 2">Interacts with PRPF8 (via RNase H homology domain) (By similarity). Component of a U5 snRNP complex that contains PRPF8 (By similarity).</text>
</comment>
<comment type="similarity">
    <text evidence="3">Belongs to the AAR2 family.</text>
</comment>
<gene>
    <name type="primary">AAR2</name>
</gene>